<evidence type="ECO:0000255" key="1">
    <source>
        <dbReference type="HAMAP-Rule" id="MF_00251"/>
    </source>
</evidence>
<evidence type="ECO:0000305" key="2"/>
<accession>A8AZK2</accession>
<keyword id="KW-1185">Reference proteome</keyword>
<keyword id="KW-0687">Ribonucleoprotein</keyword>
<keyword id="KW-0689">Ribosomal protein</keyword>
<comment type="similarity">
    <text evidence="1">Belongs to the bacterial ribosomal protein bL36 family.</text>
</comment>
<organism>
    <name type="scientific">Streptococcus gordonii (strain Challis / ATCC 35105 / BCRC 15272 / CH1 / DL1 / V288)</name>
    <dbReference type="NCBI Taxonomy" id="467705"/>
    <lineage>
        <taxon>Bacteria</taxon>
        <taxon>Bacillati</taxon>
        <taxon>Bacillota</taxon>
        <taxon>Bacilli</taxon>
        <taxon>Lactobacillales</taxon>
        <taxon>Streptococcaceae</taxon>
        <taxon>Streptococcus</taxon>
    </lineage>
</organism>
<feature type="chain" id="PRO_1000078490" description="Large ribosomal subunit protein bL36">
    <location>
        <begin position="1"/>
        <end position="38"/>
    </location>
</feature>
<name>RL36_STRGC</name>
<dbReference type="EMBL" id="CP000725">
    <property type="protein sequence ID" value="ABV10064.1"/>
    <property type="molecule type" value="Genomic_DNA"/>
</dbReference>
<dbReference type="RefSeq" id="WP_001808836.1">
    <property type="nucleotide sequence ID" value="NC_009785.1"/>
</dbReference>
<dbReference type="SMR" id="A8AZK2"/>
<dbReference type="STRING" id="467705.SGO_1962"/>
<dbReference type="GeneID" id="93964224"/>
<dbReference type="KEGG" id="sgo:SGO_1962"/>
<dbReference type="eggNOG" id="COG0257">
    <property type="taxonomic scope" value="Bacteria"/>
</dbReference>
<dbReference type="HOGENOM" id="CLU_135723_6_2_9"/>
<dbReference type="Proteomes" id="UP000001131">
    <property type="component" value="Chromosome"/>
</dbReference>
<dbReference type="GO" id="GO:0005737">
    <property type="term" value="C:cytoplasm"/>
    <property type="evidence" value="ECO:0007669"/>
    <property type="project" value="UniProtKB-ARBA"/>
</dbReference>
<dbReference type="GO" id="GO:1990904">
    <property type="term" value="C:ribonucleoprotein complex"/>
    <property type="evidence" value="ECO:0007669"/>
    <property type="project" value="UniProtKB-KW"/>
</dbReference>
<dbReference type="GO" id="GO:0005840">
    <property type="term" value="C:ribosome"/>
    <property type="evidence" value="ECO:0007669"/>
    <property type="project" value="UniProtKB-KW"/>
</dbReference>
<dbReference type="GO" id="GO:0003735">
    <property type="term" value="F:structural constituent of ribosome"/>
    <property type="evidence" value="ECO:0007669"/>
    <property type="project" value="InterPro"/>
</dbReference>
<dbReference type="GO" id="GO:0006412">
    <property type="term" value="P:translation"/>
    <property type="evidence" value="ECO:0007669"/>
    <property type="project" value="UniProtKB-UniRule"/>
</dbReference>
<dbReference type="HAMAP" id="MF_00251">
    <property type="entry name" value="Ribosomal_bL36"/>
    <property type="match status" value="1"/>
</dbReference>
<dbReference type="InterPro" id="IPR000473">
    <property type="entry name" value="Ribosomal_bL36"/>
</dbReference>
<dbReference type="InterPro" id="IPR035977">
    <property type="entry name" value="Ribosomal_bL36_sp"/>
</dbReference>
<dbReference type="NCBIfam" id="TIGR01022">
    <property type="entry name" value="rpmJ_bact"/>
    <property type="match status" value="1"/>
</dbReference>
<dbReference type="PANTHER" id="PTHR42888">
    <property type="entry name" value="50S RIBOSOMAL PROTEIN L36, CHLOROPLASTIC"/>
    <property type="match status" value="1"/>
</dbReference>
<dbReference type="PANTHER" id="PTHR42888:SF1">
    <property type="entry name" value="LARGE RIBOSOMAL SUBUNIT PROTEIN BL36C"/>
    <property type="match status" value="1"/>
</dbReference>
<dbReference type="Pfam" id="PF00444">
    <property type="entry name" value="Ribosomal_L36"/>
    <property type="match status" value="1"/>
</dbReference>
<dbReference type="SUPFAM" id="SSF57840">
    <property type="entry name" value="Ribosomal protein L36"/>
    <property type="match status" value="1"/>
</dbReference>
<dbReference type="PROSITE" id="PS00828">
    <property type="entry name" value="RIBOSOMAL_L36"/>
    <property type="match status" value="1"/>
</dbReference>
<sequence>MKVRPSVKPICEYCKVIRRNGRVMVICPANPKHKQRQG</sequence>
<protein>
    <recommendedName>
        <fullName evidence="1">Large ribosomal subunit protein bL36</fullName>
    </recommendedName>
    <alternativeName>
        <fullName evidence="2">50S ribosomal protein L36</fullName>
    </alternativeName>
</protein>
<reference key="1">
    <citation type="journal article" date="2007" name="J. Bacteriol.">
        <title>Genome-wide transcriptional changes in Streptococcus gordonii in response to competence signaling peptide.</title>
        <authorList>
            <person name="Vickerman M.M."/>
            <person name="Iobst S."/>
            <person name="Jesionowski A.M."/>
            <person name="Gill S.R."/>
        </authorList>
    </citation>
    <scope>NUCLEOTIDE SEQUENCE [LARGE SCALE GENOMIC DNA]</scope>
    <source>
        <strain>Challis / ATCC 35105 / BCRC 15272 / CH1 / DL1 / V288</strain>
    </source>
</reference>
<gene>
    <name evidence="1" type="primary">rpmJ</name>
    <name type="ordered locus">SGO_1962</name>
</gene>
<proteinExistence type="inferred from homology"/>